<proteinExistence type="inferred from homology"/>
<sequence>MMIPVILSGGSGSRLWPLSRKQFPKQFLALTGEHTLFQQTIERLVFEGMDTPIVVCNKDHKFIVQEQLAALKLETQGILMEPFGRNTAPAVAMAAMKLVNEGRDELMLVLPADHVIDDQKALQRALALATVAAERGEMVLFGVPATKPETGYGYIRSSQDALLPEGVARVAQFVEKPDEKRAAEFVQAGGYFWNSGMFLFRASRFLEELKKHDGDIYDTCVLALERSQEDGDVLSIDEATFACCPDNSIDYAVMEKTQRACVVPMSAGWSDVGCWSSLWEVHEKDDNGNVTKGDVVVQDSRNCMIHGNGKLVSVIGLENIVVVETKDAMMIAHKDKVQGVKQMVKTLDEQGRTETQNHLEVYRPWGSYDSVDMGGRFQVKHITVKPGASLSLQMHHHRAEHWIVVSGTAEVTCDENVFLLTENQSTYIPIASVHRLRNPGKIPLEIIEVQSGSYLGEDDIERFEDVYGRTSTPIERGVSVKTIAQ</sequence>
<keyword id="KW-0016">Alginate biosynthesis</keyword>
<keyword id="KW-0170">Cobalt</keyword>
<keyword id="KW-0342">GTP-binding</keyword>
<keyword id="KW-0413">Isomerase</keyword>
<keyword id="KW-0511">Multifunctional enzyme</keyword>
<keyword id="KW-0547">Nucleotide-binding</keyword>
<keyword id="KW-0548">Nucleotidyltransferase</keyword>
<keyword id="KW-1185">Reference proteome</keyword>
<keyword id="KW-0808">Transferase</keyword>
<name>ALGA_PSEPK</name>
<reference key="1">
    <citation type="journal article" date="2002" name="Environ. Microbiol.">
        <title>Complete genome sequence and comparative analysis of the metabolically versatile Pseudomonas putida KT2440.</title>
        <authorList>
            <person name="Nelson K.E."/>
            <person name="Weinel C."/>
            <person name="Paulsen I.T."/>
            <person name="Dodson R.J."/>
            <person name="Hilbert H."/>
            <person name="Martins dos Santos V.A.P."/>
            <person name="Fouts D.E."/>
            <person name="Gill S.R."/>
            <person name="Pop M."/>
            <person name="Holmes M."/>
            <person name="Brinkac L.M."/>
            <person name="Beanan M.J."/>
            <person name="DeBoy R.T."/>
            <person name="Daugherty S.C."/>
            <person name="Kolonay J.F."/>
            <person name="Madupu R."/>
            <person name="Nelson W.C."/>
            <person name="White O."/>
            <person name="Peterson J.D."/>
            <person name="Khouri H.M."/>
            <person name="Hance I."/>
            <person name="Chris Lee P."/>
            <person name="Holtzapple E.K."/>
            <person name="Scanlan D."/>
            <person name="Tran K."/>
            <person name="Moazzez A."/>
            <person name="Utterback T.R."/>
            <person name="Rizzo M."/>
            <person name="Lee K."/>
            <person name="Kosack D."/>
            <person name="Moestl D."/>
            <person name="Wedler H."/>
            <person name="Lauber J."/>
            <person name="Stjepandic D."/>
            <person name="Hoheisel J."/>
            <person name="Straetz M."/>
            <person name="Heim S."/>
            <person name="Kiewitz C."/>
            <person name="Eisen J.A."/>
            <person name="Timmis K.N."/>
            <person name="Duesterhoeft A."/>
            <person name="Tuemmler B."/>
            <person name="Fraser C.M."/>
        </authorList>
    </citation>
    <scope>NUCLEOTIDE SEQUENCE [LARGE SCALE GENOMIC DNA]</scope>
    <source>
        <strain>ATCC 47054 / DSM 6125 / CFBP 8728 / NCIMB 11950 / KT2440</strain>
    </source>
</reference>
<evidence type="ECO:0000250" key="1"/>
<evidence type="ECO:0000305" key="2"/>
<dbReference type="EC" id="5.3.1.8"/>
<dbReference type="EC" id="2.7.7.13"/>
<dbReference type="EMBL" id="AE015451">
    <property type="protein sequence ID" value="AAN66901.1"/>
    <property type="molecule type" value="Genomic_DNA"/>
</dbReference>
<dbReference type="RefSeq" id="NP_743437.1">
    <property type="nucleotide sequence ID" value="NC_002947.4"/>
</dbReference>
<dbReference type="SMR" id="Q88ND5"/>
<dbReference type="STRING" id="160488.PP_1277"/>
<dbReference type="PaxDb" id="160488-PP_1277"/>
<dbReference type="KEGG" id="ppu:PP_1277"/>
<dbReference type="PATRIC" id="fig|160488.4.peg.1354"/>
<dbReference type="eggNOG" id="COG0662">
    <property type="taxonomic scope" value="Bacteria"/>
</dbReference>
<dbReference type="eggNOG" id="COG0836">
    <property type="taxonomic scope" value="Bacteria"/>
</dbReference>
<dbReference type="HOGENOM" id="CLU_035527_1_0_6"/>
<dbReference type="OrthoDB" id="9806359at2"/>
<dbReference type="PhylomeDB" id="Q88ND5"/>
<dbReference type="BioCyc" id="PPUT160488:G1G01-1364-MONOMER"/>
<dbReference type="UniPathway" id="UPA00126">
    <property type="reaction ID" value="UER00423"/>
</dbReference>
<dbReference type="UniPathway" id="UPA00126">
    <property type="reaction ID" value="UER00930"/>
</dbReference>
<dbReference type="Proteomes" id="UP000000556">
    <property type="component" value="Chromosome"/>
</dbReference>
<dbReference type="GO" id="GO:0005525">
    <property type="term" value="F:GTP binding"/>
    <property type="evidence" value="ECO:0007669"/>
    <property type="project" value="UniProtKB-KW"/>
</dbReference>
<dbReference type="GO" id="GO:0004475">
    <property type="term" value="F:mannose-1-phosphate guanylyltransferase (GTP) activity"/>
    <property type="evidence" value="ECO:0007669"/>
    <property type="project" value="UniProtKB-EC"/>
</dbReference>
<dbReference type="GO" id="GO:0004476">
    <property type="term" value="F:mannose-6-phosphate isomerase activity"/>
    <property type="evidence" value="ECO:0007669"/>
    <property type="project" value="UniProtKB-EC"/>
</dbReference>
<dbReference type="GO" id="GO:0042121">
    <property type="term" value="P:alginic acid biosynthetic process"/>
    <property type="evidence" value="ECO:0007669"/>
    <property type="project" value="UniProtKB-KW"/>
</dbReference>
<dbReference type="GO" id="GO:0009298">
    <property type="term" value="P:GDP-mannose biosynthetic process"/>
    <property type="evidence" value="ECO:0007669"/>
    <property type="project" value="UniProtKB-UniPathway"/>
</dbReference>
<dbReference type="CDD" id="cd02213">
    <property type="entry name" value="cupin_PMI_typeII_C"/>
    <property type="match status" value="1"/>
</dbReference>
<dbReference type="CDD" id="cd02509">
    <property type="entry name" value="GDP-M1P_Guanylyltransferase"/>
    <property type="match status" value="1"/>
</dbReference>
<dbReference type="FunFam" id="3.90.550.10:FF:000046">
    <property type="entry name" value="Mannose-1-phosphate guanylyltransferase (GDP)"/>
    <property type="match status" value="1"/>
</dbReference>
<dbReference type="FunFam" id="2.60.120.10:FF:000032">
    <property type="entry name" value="Mannose-1-phosphate guanylyltransferase/mannose-6-phosphate isomerase"/>
    <property type="match status" value="1"/>
</dbReference>
<dbReference type="Gene3D" id="2.60.120.10">
    <property type="entry name" value="Jelly Rolls"/>
    <property type="match status" value="1"/>
</dbReference>
<dbReference type="Gene3D" id="3.90.550.10">
    <property type="entry name" value="Spore Coat Polysaccharide Biosynthesis Protein SpsA, Chain A"/>
    <property type="match status" value="1"/>
</dbReference>
<dbReference type="InterPro" id="IPR049577">
    <property type="entry name" value="GMPP_N"/>
</dbReference>
<dbReference type="InterPro" id="IPR006375">
    <property type="entry name" value="Man1P_GuaTrfase/Man6P_Isoase"/>
</dbReference>
<dbReference type="InterPro" id="IPR001538">
    <property type="entry name" value="Man6P_isomerase-2_C"/>
</dbReference>
<dbReference type="InterPro" id="IPR054566">
    <property type="entry name" value="ManC/GMP-like_b-helix"/>
</dbReference>
<dbReference type="InterPro" id="IPR051161">
    <property type="entry name" value="Mannose-6P_isomerase_type2"/>
</dbReference>
<dbReference type="InterPro" id="IPR005835">
    <property type="entry name" value="NTP_transferase_dom"/>
</dbReference>
<dbReference type="InterPro" id="IPR029044">
    <property type="entry name" value="Nucleotide-diphossugar_trans"/>
</dbReference>
<dbReference type="InterPro" id="IPR014710">
    <property type="entry name" value="RmlC-like_jellyroll"/>
</dbReference>
<dbReference type="InterPro" id="IPR011051">
    <property type="entry name" value="RmlC_Cupin_sf"/>
</dbReference>
<dbReference type="NCBIfam" id="TIGR01479">
    <property type="entry name" value="GMP_PMI"/>
    <property type="match status" value="1"/>
</dbReference>
<dbReference type="PANTHER" id="PTHR46390">
    <property type="entry name" value="MANNOSE-1-PHOSPHATE GUANYLYLTRANSFERASE"/>
    <property type="match status" value="1"/>
</dbReference>
<dbReference type="PANTHER" id="PTHR46390:SF1">
    <property type="entry name" value="MANNOSE-1-PHOSPHATE GUANYLYLTRANSFERASE"/>
    <property type="match status" value="1"/>
</dbReference>
<dbReference type="Pfam" id="PF22640">
    <property type="entry name" value="ManC_GMP_beta-helix"/>
    <property type="match status" value="1"/>
</dbReference>
<dbReference type="Pfam" id="PF01050">
    <property type="entry name" value="MannoseP_isomer"/>
    <property type="match status" value="1"/>
</dbReference>
<dbReference type="Pfam" id="PF00483">
    <property type="entry name" value="NTP_transferase"/>
    <property type="match status" value="1"/>
</dbReference>
<dbReference type="SUPFAM" id="SSF53448">
    <property type="entry name" value="Nucleotide-diphospho-sugar transferases"/>
    <property type="match status" value="1"/>
</dbReference>
<dbReference type="SUPFAM" id="SSF51182">
    <property type="entry name" value="RmlC-like cupins"/>
    <property type="match status" value="1"/>
</dbReference>
<organism>
    <name type="scientific">Pseudomonas putida (strain ATCC 47054 / DSM 6125 / CFBP 8728 / NCIMB 11950 / KT2440)</name>
    <dbReference type="NCBI Taxonomy" id="160488"/>
    <lineage>
        <taxon>Bacteria</taxon>
        <taxon>Pseudomonadati</taxon>
        <taxon>Pseudomonadota</taxon>
        <taxon>Gammaproteobacteria</taxon>
        <taxon>Pseudomonadales</taxon>
        <taxon>Pseudomonadaceae</taxon>
        <taxon>Pseudomonas</taxon>
    </lineage>
</organism>
<feature type="chain" id="PRO_0000194250" description="Alginate biosynthesis protein AlgA">
    <location>
        <begin position="1"/>
        <end position="485"/>
    </location>
</feature>
<accession>Q88ND5</accession>
<gene>
    <name type="primary">algA</name>
    <name type="ordered locus">PP_1277</name>
</gene>
<comment type="function">
    <text evidence="1">Produces a precursor for alginate polymerization. The alginate layer provides a protective barrier against host immune defenses and antibiotics (By similarity).</text>
</comment>
<comment type="catalytic activity">
    <reaction>
        <text>D-mannose 6-phosphate = D-fructose 6-phosphate</text>
        <dbReference type="Rhea" id="RHEA:12356"/>
        <dbReference type="ChEBI" id="CHEBI:58735"/>
        <dbReference type="ChEBI" id="CHEBI:61527"/>
        <dbReference type="EC" id="5.3.1.8"/>
    </reaction>
</comment>
<comment type="catalytic activity">
    <reaction>
        <text>alpha-D-mannose 1-phosphate + GTP + H(+) = GDP-alpha-D-mannose + diphosphate</text>
        <dbReference type="Rhea" id="RHEA:15229"/>
        <dbReference type="ChEBI" id="CHEBI:15378"/>
        <dbReference type="ChEBI" id="CHEBI:33019"/>
        <dbReference type="ChEBI" id="CHEBI:37565"/>
        <dbReference type="ChEBI" id="CHEBI:57527"/>
        <dbReference type="ChEBI" id="CHEBI:58409"/>
        <dbReference type="EC" id="2.7.7.13"/>
    </reaction>
</comment>
<comment type="cofactor">
    <cofactor evidence="1">
        <name>Co(2+)</name>
        <dbReference type="ChEBI" id="CHEBI:48828"/>
    </cofactor>
    <text evidence="1">Co(2+) (for PMI).</text>
</comment>
<comment type="pathway">
    <text>Nucleotide-sugar biosynthesis; GDP-alpha-D-mannose biosynthesis; GDP-alpha-D-mannose from alpha-D-mannose 1-phosphate (GTP route): step 1/1.</text>
</comment>
<comment type="pathway">
    <text>Nucleotide-sugar biosynthesis; GDP-alpha-D-mannose biosynthesis; alpha-D-mannose 1-phosphate from D-fructose 6-phosphate: step 1/2.</text>
</comment>
<comment type="subunit">
    <text evidence="1">Monomer.</text>
</comment>
<comment type="similarity">
    <text evidence="2">Belongs to the mannose-6-phosphate isomerase type 2 family.</text>
</comment>
<protein>
    <recommendedName>
        <fullName>Alginate biosynthesis protein AlgA</fullName>
    </recommendedName>
    <domain>
        <recommendedName>
            <fullName>Mannose-6-phosphate isomerase</fullName>
            <ecNumber>5.3.1.8</ecNumber>
        </recommendedName>
        <alternativeName>
            <fullName>Phosphohexomutase</fullName>
        </alternativeName>
        <alternativeName>
            <fullName>Phosphomannose isomerase</fullName>
            <shortName>PMI</shortName>
        </alternativeName>
    </domain>
    <domain>
        <recommendedName>
            <fullName>Mannose-1-phosphate guanylyltransferase</fullName>
            <ecNumber>2.7.7.13</ecNumber>
        </recommendedName>
        <alternativeName>
            <fullName>GDP-mannose pyrophosphorylase</fullName>
            <shortName>GMP</shortName>
            <shortName>GMPP</shortName>
        </alternativeName>
        <alternativeName>
            <fullName>GTP--mannose-1-phosphate guanylyltransferase</fullName>
        </alternativeName>
    </domain>
</protein>